<dbReference type="EC" id="2.4.1.-" evidence="3"/>
<dbReference type="EMBL" id="KY860725">
    <property type="protein sequence ID" value="ATL15304.1"/>
    <property type="molecule type" value="mRNA"/>
</dbReference>
<dbReference type="SMR" id="A0A291PQH4"/>
<dbReference type="GlyCosmos" id="A0A291PQH4">
    <property type="glycosylation" value="3 sites, No reported glycans"/>
</dbReference>
<dbReference type="BioCyc" id="MetaCyc:MONOMER-21278"/>
<dbReference type="GO" id="GO:0005783">
    <property type="term" value="C:endoplasmic reticulum"/>
    <property type="evidence" value="ECO:0000314"/>
    <property type="project" value="UniProtKB"/>
</dbReference>
<dbReference type="GO" id="GO:0005789">
    <property type="term" value="C:endoplasmic reticulum membrane"/>
    <property type="evidence" value="ECO:0007669"/>
    <property type="project" value="UniProtKB-SubCell"/>
</dbReference>
<dbReference type="GO" id="GO:0035251">
    <property type="term" value="F:UDP-glucosyltransferase activity"/>
    <property type="evidence" value="ECO:0000314"/>
    <property type="project" value="UniProtKB"/>
</dbReference>
<dbReference type="GO" id="GO:0016053">
    <property type="term" value="P:organic acid biosynthetic process"/>
    <property type="evidence" value="ECO:0000314"/>
    <property type="project" value="UniProtKB"/>
</dbReference>
<dbReference type="CDD" id="cd03784">
    <property type="entry name" value="GT1_Gtf-like"/>
    <property type="match status" value="1"/>
</dbReference>
<dbReference type="FunFam" id="3.40.50.2000:FF:000050">
    <property type="entry name" value="UDP-glucuronosyltransferase"/>
    <property type="match status" value="1"/>
</dbReference>
<dbReference type="Gene3D" id="3.40.50.2000">
    <property type="entry name" value="Glycogen Phosphorylase B"/>
    <property type="match status" value="1"/>
</dbReference>
<dbReference type="InterPro" id="IPR050271">
    <property type="entry name" value="UDP-glycosyltransferase"/>
</dbReference>
<dbReference type="InterPro" id="IPR002213">
    <property type="entry name" value="UDP_glucos_trans"/>
</dbReference>
<dbReference type="PANTHER" id="PTHR48043">
    <property type="entry name" value="EG:EG0003.4 PROTEIN-RELATED"/>
    <property type="match status" value="1"/>
</dbReference>
<dbReference type="PANTHER" id="PTHR48043:SF145">
    <property type="entry name" value="FI06409P-RELATED"/>
    <property type="match status" value="1"/>
</dbReference>
<dbReference type="Pfam" id="PF00201">
    <property type="entry name" value="UDPGT"/>
    <property type="match status" value="1"/>
</dbReference>
<dbReference type="SUPFAM" id="SSF53756">
    <property type="entry name" value="UDP-Glycosyltransferase/glycogen phosphorylase"/>
    <property type="match status" value="1"/>
</dbReference>
<accession>A0A291PQH4</accession>
<sequence length="515" mass="59115">MEFRLLILALFSVLMSTSNGAEILALFPIHGISNYNVAEALLKTLANRGHNVTVVTSFPQKKPVPNLYEIDVSGAKGLATNSIHFERLQTIIQDVKSNFKNMVRLSRTYCEIMFSDPRVLNIRDKKFDLVINAVFGSDCDAGFAWKSQAPLISILNARHTPWALHRMGNPSNPAYMPVIHSRFPVKMNFFQRMINTGWHLYFLYMYFYYGNGEDANKMARKFFGNDMPDINEMVFNTSLLFVNTHFSVDMPYPLVPNCIEIGGIHVKEPQPLPLEIQKFMDEAEHGVIFFTLGSMVRTSTFPNQTIQAFKEAFAELPQRVLWKFENENEDMPSNVLIRKWFPQNDIFGHKNIKAFISHGGNSGALEAVHFGVPIIGIPLFYDQYRNILSFVKEGVAVLLDVNDLTKDNILSSVRTVVNDKSYSERMKALSQLFRDRPMSPLDTAVYWTEYVIRHRGAHHLKTAGAFLHWYQYLLLDVITFLLVTFCAFCFIVKYICKALIHHYWSSSKSEKLKKN</sequence>
<feature type="signal peptide" evidence="1">
    <location>
        <begin position="1"/>
        <end position="20"/>
    </location>
</feature>
<feature type="chain" id="PRO_5012109561" description="UDP-glucosyltransferase 2" evidence="1">
    <location>
        <begin position="21"/>
        <end position="515"/>
    </location>
</feature>
<feature type="topological domain" description="Lumenal" evidence="6">
    <location>
        <begin position="21"/>
        <end position="471"/>
    </location>
</feature>
<feature type="transmembrane region" description="Helical" evidence="1">
    <location>
        <begin position="472"/>
        <end position="492"/>
    </location>
</feature>
<feature type="topological domain" description="Cytoplasmic" evidence="6">
    <location>
        <begin position="493"/>
        <end position="515"/>
    </location>
</feature>
<feature type="glycosylation site" description="N-linked (GlcNAc...) asparagine" evidence="2">
    <location>
        <position position="51"/>
    </location>
</feature>
<feature type="glycosylation site" description="N-linked (GlcNAc...) asparagine" evidence="2">
    <location>
        <position position="236"/>
    </location>
</feature>
<feature type="glycosylation site" description="N-linked (GlcNAc...) asparagine" evidence="2">
    <location>
        <position position="303"/>
    </location>
</feature>
<reference evidence="7" key="1">
    <citation type="journal article" date="2017" name="Nat. Commun.">
        <title>Characterization of a membrane-bound C-glucosyltransferase responsible for carminic acid biosynthesis in Dactylopius coccus Costa.</title>
        <authorList>
            <person name="Kannangara R."/>
            <person name="Siukstaite L."/>
            <person name="Borch-Jensen J."/>
            <person name="Madsen B."/>
            <person name="Kongstad K.T."/>
            <person name="Staerk D."/>
            <person name="Bennedsen M."/>
            <person name="Okkels F.T."/>
            <person name="Rasmussen S.A."/>
            <person name="Larsen T.O."/>
            <person name="Frandsen R.J.N."/>
            <person name="Moeller B.L."/>
        </authorList>
    </citation>
    <scope>NUCLEOTIDE SEQUENCE [MRNA]</scope>
    <scope>IDENTIFICATION BY MASS SPECTROMETRY</scope>
    <scope>FUNCTION</scope>
    <scope>CATALYTIC ACTIVITY</scope>
    <scope>SUBCELLULAR LOCATION</scope>
    <scope>DEVELOPMENTAL STAGE</scope>
    <scope>GLYCOSYLATION</scope>
</reference>
<organism evidence="7">
    <name type="scientific">Dactylopius coccus</name>
    <name type="common">Cochineal</name>
    <dbReference type="NCBI Taxonomy" id="765876"/>
    <lineage>
        <taxon>Eukaryota</taxon>
        <taxon>Metazoa</taxon>
        <taxon>Ecdysozoa</taxon>
        <taxon>Arthropoda</taxon>
        <taxon>Hexapoda</taxon>
        <taxon>Insecta</taxon>
        <taxon>Pterygota</taxon>
        <taxon>Neoptera</taxon>
        <taxon>Paraneoptera</taxon>
        <taxon>Hemiptera</taxon>
        <taxon>Sternorrhyncha</taxon>
        <taxon>Coccoidea</taxon>
        <taxon>Dactylopiidae</taxon>
        <taxon>Dactylopius</taxon>
    </lineage>
</organism>
<protein>
    <recommendedName>
        <fullName evidence="4">UDP-glucosyltransferase 2</fullName>
        <shortName evidence="4">DcUGT2</shortName>
        <ecNumber evidence="3">2.4.1.-</ecNumber>
    </recommendedName>
</protein>
<evidence type="ECO:0000255" key="1"/>
<evidence type="ECO:0000255" key="2">
    <source>
        <dbReference type="PROSITE-ProRule" id="PRU00498"/>
    </source>
</evidence>
<evidence type="ECO:0000269" key="3">
    <source>
    </source>
</evidence>
<evidence type="ECO:0000303" key="4">
    <source>
    </source>
</evidence>
<evidence type="ECO:0000305" key="5"/>
<evidence type="ECO:0000305" key="6">
    <source>
    </source>
</evidence>
<evidence type="ECO:0000312" key="7">
    <source>
        <dbReference type="EMBL" id="ATL15304.1"/>
    </source>
</evidence>
<keyword id="KW-0256">Endoplasmic reticulum</keyword>
<keyword id="KW-0325">Glycoprotein</keyword>
<keyword id="KW-0328">Glycosyltransferase</keyword>
<keyword id="KW-0472">Membrane</keyword>
<keyword id="KW-0732">Signal</keyword>
<keyword id="KW-0808">Transferase</keyword>
<keyword id="KW-0812">Transmembrane</keyword>
<keyword id="KW-1133">Transmembrane helix</keyword>
<gene>
    <name evidence="4" type="primary">UTG2</name>
</gene>
<name>UGT2_DACCO</name>
<proteinExistence type="evidence at protein level"/>
<comment type="function">
    <text evidence="3">Membrane-bound UDP-glucosyltransferase (UGT) which catalyzes the C-glucosylation of kermesate and flavokermesate to produce carminate and flavokermesate 7-C-beta-D-glucoside (dcll) respectively (PubMed:29215010). Carminate is used as a deterrent against insect predators (PubMed:29215010).</text>
</comment>
<comment type="catalytic activity">
    <reaction evidence="3">
        <text>kermesate + UDP-alpha-D-glucose = carminate + UDP + 2 H(+)</text>
        <dbReference type="Rhea" id="RHEA:63752"/>
        <dbReference type="ChEBI" id="CHEBI:15378"/>
        <dbReference type="ChEBI" id="CHEBI:58223"/>
        <dbReference type="ChEBI" id="CHEBI:58885"/>
        <dbReference type="ChEBI" id="CHEBI:149530"/>
        <dbReference type="ChEBI" id="CHEBI:149531"/>
    </reaction>
    <physiologicalReaction direction="left-to-right" evidence="3">
        <dbReference type="Rhea" id="RHEA:63753"/>
    </physiologicalReaction>
</comment>
<comment type="catalytic activity">
    <reaction evidence="3">
        <text>flavokermesate + UDP-alpha-D-glucose = flavokermesate 7-C-beta-D-glucoside + UDP + 2 H(+)</text>
        <dbReference type="Rhea" id="RHEA:63756"/>
        <dbReference type="ChEBI" id="CHEBI:15378"/>
        <dbReference type="ChEBI" id="CHEBI:58223"/>
        <dbReference type="ChEBI" id="CHEBI:58885"/>
        <dbReference type="ChEBI" id="CHEBI:149532"/>
        <dbReference type="ChEBI" id="CHEBI:149533"/>
    </reaction>
    <physiologicalReaction direction="left-to-right" evidence="3">
        <dbReference type="Rhea" id="RHEA:63757"/>
    </physiologicalReaction>
</comment>
<comment type="subcellular location">
    <subcellularLocation>
        <location evidence="3">Endoplasmic reticulum membrane</location>
        <topology evidence="5">Single-pass type I membrane protein</topology>
    </subcellularLocation>
    <text evidence="3">Localization to the endoplasmic reticulum membrane is critical for its activity.</text>
</comment>
<comment type="developmental stage">
    <text evidence="3">Expressed in adult female.</text>
</comment>
<comment type="PTM">
    <text evidence="3">Glycosylated.</text>
</comment>
<comment type="miscellaneous">
    <text evidence="3">Carminate, also known as cochineal dye, is used as a fabric and cosmetics dye and as a natural food coloring.</text>
</comment>
<comment type="similarity">
    <text evidence="5">Belongs to the UDP-glycosyltransferase family.</text>
</comment>